<accession>O52547</accession>
<accession>G0FS60</accession>
<proteinExistence type="evidence at protein level"/>
<reference key="1">
    <citation type="journal article" date="1998" name="Chem. Biol.">
        <title>Biosynthesis of the ansamycin antibiotic rifamycin: deductions from the molecular analysis of the rif biosynthetic gene cluster of Amycolatopsis mediterranei S699.</title>
        <authorList>
            <person name="August P.R."/>
            <person name="Tang L."/>
            <person name="Yoon Y.J."/>
            <person name="Ning S."/>
            <person name="Mueller R."/>
            <person name="Yu T.W."/>
            <person name="Taylor M."/>
            <person name="Hoffmann D."/>
            <person name="Kim C.G."/>
            <person name="Zhang X."/>
            <person name="Hutchinson C.R."/>
            <person name="Floss H.G."/>
        </authorList>
    </citation>
    <scope>NUCLEOTIDE SEQUENCE [GENOMIC DNA]</scope>
    <source>
        <strain>S699</strain>
    </source>
</reference>
<reference key="2">
    <citation type="journal article" date="2011" name="J. Bacteriol.">
        <title>Whole genome sequence of the rifamycin B-producing strain Amycolatopsis mediterranei S699.</title>
        <authorList>
            <person name="Verma M."/>
            <person name="Kaur J."/>
            <person name="Kumar M."/>
            <person name="Kumari K."/>
            <person name="Saxena A."/>
            <person name="Anand S."/>
            <person name="Nigam A."/>
            <person name="Ravi V."/>
            <person name="Raghuvanshi S."/>
            <person name="Khurana P."/>
            <person name="Tyagi A.K."/>
            <person name="Khurana J.P."/>
            <person name="Lal R."/>
        </authorList>
    </citation>
    <scope>NUCLEOTIDE SEQUENCE [LARGE SCALE GENOMIC DNA]</scope>
    <source>
        <strain>S699</strain>
    </source>
</reference>
<reference key="3">
    <citation type="journal article" date="2012" name="J. Bacteriol.">
        <title>Complete genome sequence of Amycolatopsis mediterranei S699 based on de novo assembly via a combinatorial sequencing strategy.</title>
        <authorList>
            <person name="Tang B."/>
            <person name="Zhao W."/>
            <person name="Zheng H."/>
            <person name="Zhuo Y."/>
            <person name="Zhang L."/>
            <person name="Zhao G.P."/>
        </authorList>
    </citation>
    <scope>NUCLEOTIDE SEQUENCE [LARGE SCALE GENOMIC DNA]</scope>
    <source>
        <strain>S699</strain>
    </source>
</reference>
<reference key="4">
    <citation type="journal article" date="2002" name="Protein Expr. Purif.">
        <title>Expression and purification of the rifamycin amide synthase, RifF, an enzyme homologous to the prokaryotic arylamine N-acetyltransferases.</title>
        <authorList>
            <person name="Pompeo F."/>
            <person name="Mushtaq A."/>
            <person name="Sim E."/>
        </authorList>
    </citation>
    <scope>PROTEIN SEQUENCE OF 1-10</scope>
    <scope>IDENTIFICATION BY MASS SPECTROMETRY</scope>
    <scope>3D-STRUCTURE MODELING</scope>
    <source>
        <strain>S699</strain>
    </source>
</reference>
<reference key="5">
    <citation type="journal article" date="1999" name="Microbiology">
        <title>Intermediates of rifamycin polyketide synthase produced by an Amycolatopsis mediterranei mutant with inactivated rifF gene.</title>
        <authorList>
            <person name="Stratmann A."/>
            <person name="Toupet C."/>
            <person name="Schilling W."/>
            <person name="Traber R."/>
            <person name="Oberer L."/>
            <person name="Schupp T."/>
        </authorList>
    </citation>
    <scope>FUNCTION</scope>
    <scope>DISRUPTION PHENOTYPE</scope>
    <source>
        <strain>N/813</strain>
    </source>
</reference>
<reference key="6">
    <citation type="journal article" date="1999" name="Proc. Natl. Acad. Sci. U.S.A.">
        <title>Direct evidence that the rifamycin polyketide synthase assembles polyketide chains processively.</title>
        <authorList>
            <person name="Yu T.W."/>
            <person name="Shen Y."/>
            <person name="Doi-Katayama Y."/>
            <person name="Tang L."/>
            <person name="Park C."/>
            <person name="Moore B.S."/>
            <person name="Richard Hutchinson C."/>
            <person name="Floss H.G."/>
        </authorList>
    </citation>
    <scope>FUNCTION</scope>
    <scope>DISRUPTION PHENOTYPE</scope>
    <source>
        <strain>S699</strain>
    </source>
</reference>
<gene>
    <name type="primary">rifF</name>
    <name type="ordered locus">RAM_03180</name>
    <name type="ordered locus">AMES_0620</name>
</gene>
<keyword id="KW-0045">Antibiotic biosynthesis</keyword>
<keyword id="KW-0903">Direct protein sequencing</keyword>
<keyword id="KW-0456">Lyase</keyword>
<evidence type="ECO:0000250" key="1"/>
<evidence type="ECO:0000269" key="2">
    <source>
    </source>
</evidence>
<evidence type="ECO:0000269" key="3">
    <source>
    </source>
</evidence>
<evidence type="ECO:0000305" key="4"/>
<name>RIFF_AMYMS</name>
<protein>
    <recommendedName>
        <fullName>Proansamycin X synthase</fullName>
        <ecNumber>4.4.1.-</ecNumber>
    </recommendedName>
    <alternativeName>
        <fullName>Rifamycin amide synthase</fullName>
    </alternativeName>
</protein>
<dbReference type="EC" id="4.4.1.-"/>
<dbReference type="EMBL" id="AF040570">
    <property type="protein sequence ID" value="AAC01715.1"/>
    <property type="molecule type" value="Genomic_DNA"/>
</dbReference>
<dbReference type="EMBL" id="CP002896">
    <property type="protein sequence ID" value="AEK39128.1"/>
    <property type="molecule type" value="Genomic_DNA"/>
</dbReference>
<dbReference type="EMBL" id="CP003729">
    <property type="protein sequence ID" value="AFO74156.1"/>
    <property type="molecule type" value="Genomic_DNA"/>
</dbReference>
<dbReference type="RefSeq" id="WP_013222552.1">
    <property type="nucleotide sequence ID" value="NC_018266.1"/>
</dbReference>
<dbReference type="SMR" id="O52547"/>
<dbReference type="STRING" id="713604.RAM_03180"/>
<dbReference type="GeneID" id="92868424"/>
<dbReference type="KEGG" id="amm:AMES_0620"/>
<dbReference type="KEGG" id="amn:RAM_03180"/>
<dbReference type="PATRIC" id="fig|713604.12.peg.661"/>
<dbReference type="HOGENOM" id="CLU_049918_1_0_11"/>
<dbReference type="BioCyc" id="MetaCyc:MONOMER-14108"/>
<dbReference type="UniPathway" id="UPA01029"/>
<dbReference type="Proteomes" id="UP000006138">
    <property type="component" value="Chromosome"/>
</dbReference>
<dbReference type="GO" id="GO:0004060">
    <property type="term" value="F:arylamine N-acetyltransferase activity"/>
    <property type="evidence" value="ECO:0007669"/>
    <property type="project" value="TreeGrafter"/>
</dbReference>
<dbReference type="GO" id="GO:0016829">
    <property type="term" value="F:lyase activity"/>
    <property type="evidence" value="ECO:0007669"/>
    <property type="project" value="UniProtKB-KW"/>
</dbReference>
<dbReference type="GO" id="GO:0017000">
    <property type="term" value="P:antibiotic biosynthetic process"/>
    <property type="evidence" value="ECO:0007669"/>
    <property type="project" value="UniProtKB-KW"/>
</dbReference>
<dbReference type="Gene3D" id="3.30.2140.20">
    <property type="match status" value="1"/>
</dbReference>
<dbReference type="InterPro" id="IPR001447">
    <property type="entry name" value="Arylamine_N-AcTrfase"/>
</dbReference>
<dbReference type="InterPro" id="IPR053710">
    <property type="entry name" value="Arylamine_NAT_domain_sf"/>
</dbReference>
<dbReference type="InterPro" id="IPR038765">
    <property type="entry name" value="Papain-like_cys_pep_sf"/>
</dbReference>
<dbReference type="PANTHER" id="PTHR11786:SF0">
    <property type="entry name" value="ARYLAMINE N-ACETYLTRANSFERASE 4-RELATED"/>
    <property type="match status" value="1"/>
</dbReference>
<dbReference type="PANTHER" id="PTHR11786">
    <property type="entry name" value="N-HYDROXYARYLAMINE O-ACETYLTRANSFERASE"/>
    <property type="match status" value="1"/>
</dbReference>
<dbReference type="Pfam" id="PF00797">
    <property type="entry name" value="Acetyltransf_2"/>
    <property type="match status" value="1"/>
</dbReference>
<dbReference type="PRINTS" id="PR01543">
    <property type="entry name" value="ANATRNSFRASE"/>
</dbReference>
<dbReference type="SUPFAM" id="SSF54001">
    <property type="entry name" value="Cysteine proteinases"/>
    <property type="match status" value="1"/>
</dbReference>
<feature type="chain" id="PRO_0000107920" description="Proansamycin X synthase">
    <location>
        <begin position="1"/>
        <end position="260"/>
    </location>
</feature>
<feature type="active site" description="Acyl-thioester intermediate" evidence="1">
    <location>
        <position position="73"/>
    </location>
</feature>
<feature type="active site" evidence="1">
    <location>
        <position position="111"/>
    </location>
</feature>
<feature type="active site" evidence="1">
    <location>
        <position position="126"/>
    </location>
</feature>
<sequence>MNVFDVETYLQRIGCGGETGVDLETLAKLQKSHLMAIPYSSLAYELRDAVNVVDLDEDDVFVTSIAEGQGGACYHLNRLFHRLLTELGYDVTPLAGSTAEGRETFGTDVEHMFNLVTLDGADWLVDVGYPGPTYVEPLAVSPAVQTQYGSQFRLVEQETGYALQRRGAVTRWSVVYTFTTQPRQWSDWKELEDNFRALVGDTTRTDTQETLCGRAFANGQVFLRQRRYLTVENGREQVRTITDDDEFRALVSRVLSGDHG</sequence>
<organism>
    <name type="scientific">Amycolatopsis mediterranei (strain S699)</name>
    <name type="common">Nocardia mediterranei</name>
    <dbReference type="NCBI Taxonomy" id="713604"/>
    <lineage>
        <taxon>Bacteria</taxon>
        <taxon>Bacillati</taxon>
        <taxon>Actinomycetota</taxon>
        <taxon>Actinomycetes</taxon>
        <taxon>Pseudonocardiales</taxon>
        <taxon>Pseudonocardiaceae</taxon>
        <taxon>Amycolatopsis</taxon>
    </lineage>
</organism>
<comment type="function">
    <text evidence="2 3">Catalyzes the release of the completed linear polyketide from the rif PKS by forming an intramolecular amide bond, in this way terminating polyketide assembly and forming the macrocyclic compound proansamycin X, an intermediate in the rifamycin B biosynthesis.</text>
</comment>
<comment type="pathway">
    <text>Antibiotic biosynthesis; rifamycin B biosynthesis.</text>
</comment>
<comment type="disruption phenotype">
    <text evidence="2 3">Inactivation of rifF gives a rifamycin B non-producing mutant that still accumulates a series of linear polyketides ranging from the tetra- to a decaketide, also detected in the wild-type.</text>
</comment>
<comment type="similarity">
    <text evidence="4">Belongs to the arylamine N-acetyltransferase family.</text>
</comment>